<proteinExistence type="inferred from homology"/>
<evidence type="ECO:0000250" key="1">
    <source>
        <dbReference type="UniProtKB" id="P00396"/>
    </source>
</evidence>
<evidence type="ECO:0000250" key="2">
    <source>
        <dbReference type="UniProtKB" id="P00401"/>
    </source>
</evidence>
<evidence type="ECO:0000255" key="3"/>
<evidence type="ECO:0000305" key="4"/>
<dbReference type="EC" id="7.1.1.9"/>
<dbReference type="EMBL" id="X57693">
    <property type="protein sequence ID" value="CAA40874.1"/>
    <property type="molecule type" value="Genomic_DNA"/>
</dbReference>
<dbReference type="EMBL" id="M57645">
    <property type="protein sequence ID" value="AAA87330.1"/>
    <property type="molecule type" value="Genomic_DNA"/>
</dbReference>
<dbReference type="PIR" id="S14138">
    <property type="entry name" value="S14138"/>
</dbReference>
<dbReference type="RefSeq" id="NP_064063.1">
    <property type="nucleotide sequence ID" value="NC_002511.2"/>
</dbReference>
<dbReference type="SMR" id="P24794"/>
<dbReference type="GeneID" id="809579"/>
<dbReference type="KEGG" id="bvg:809579"/>
<dbReference type="UniPathway" id="UPA00705"/>
<dbReference type="GO" id="GO:0005743">
    <property type="term" value="C:mitochondrial inner membrane"/>
    <property type="evidence" value="ECO:0007669"/>
    <property type="project" value="UniProtKB-SubCell"/>
</dbReference>
<dbReference type="GO" id="GO:0045277">
    <property type="term" value="C:respiratory chain complex IV"/>
    <property type="evidence" value="ECO:0007669"/>
    <property type="project" value="InterPro"/>
</dbReference>
<dbReference type="GO" id="GO:0004129">
    <property type="term" value="F:cytochrome-c oxidase activity"/>
    <property type="evidence" value="ECO:0007669"/>
    <property type="project" value="UniProtKB-EC"/>
</dbReference>
<dbReference type="GO" id="GO:0020037">
    <property type="term" value="F:heme binding"/>
    <property type="evidence" value="ECO:0007669"/>
    <property type="project" value="InterPro"/>
</dbReference>
<dbReference type="GO" id="GO:0046872">
    <property type="term" value="F:metal ion binding"/>
    <property type="evidence" value="ECO:0007669"/>
    <property type="project" value="UniProtKB-KW"/>
</dbReference>
<dbReference type="GO" id="GO:0015990">
    <property type="term" value="P:electron transport coupled proton transport"/>
    <property type="evidence" value="ECO:0007669"/>
    <property type="project" value="InterPro"/>
</dbReference>
<dbReference type="GO" id="GO:0006123">
    <property type="term" value="P:mitochondrial electron transport, cytochrome c to oxygen"/>
    <property type="evidence" value="ECO:0007669"/>
    <property type="project" value="TreeGrafter"/>
</dbReference>
<dbReference type="CDD" id="cd01663">
    <property type="entry name" value="Cyt_c_Oxidase_I"/>
    <property type="match status" value="1"/>
</dbReference>
<dbReference type="FunFam" id="1.20.210.10:FF:000001">
    <property type="entry name" value="Cytochrome c oxidase subunit 1"/>
    <property type="match status" value="1"/>
</dbReference>
<dbReference type="Gene3D" id="1.20.210.10">
    <property type="entry name" value="Cytochrome c oxidase-like, subunit I domain"/>
    <property type="match status" value="1"/>
</dbReference>
<dbReference type="InterPro" id="IPR023616">
    <property type="entry name" value="Cyt_c_oxase-like_su1_dom"/>
</dbReference>
<dbReference type="InterPro" id="IPR036927">
    <property type="entry name" value="Cyt_c_oxase-like_su1_sf"/>
</dbReference>
<dbReference type="InterPro" id="IPR000883">
    <property type="entry name" value="Cyt_C_Oxase_1"/>
</dbReference>
<dbReference type="InterPro" id="IPR023615">
    <property type="entry name" value="Cyt_c_Oxase_su1_BS"/>
</dbReference>
<dbReference type="InterPro" id="IPR033944">
    <property type="entry name" value="Cyt_c_oxase_su1_dom"/>
</dbReference>
<dbReference type="InterPro" id="IPR014241">
    <property type="entry name" value="Cyt_c_oxidase_su1_bac"/>
</dbReference>
<dbReference type="NCBIfam" id="TIGR02891">
    <property type="entry name" value="CtaD_CoxA"/>
    <property type="match status" value="1"/>
</dbReference>
<dbReference type="PANTHER" id="PTHR10422">
    <property type="entry name" value="CYTOCHROME C OXIDASE SUBUNIT 1"/>
    <property type="match status" value="1"/>
</dbReference>
<dbReference type="PANTHER" id="PTHR10422:SF18">
    <property type="entry name" value="CYTOCHROME C OXIDASE SUBUNIT 1"/>
    <property type="match status" value="1"/>
</dbReference>
<dbReference type="Pfam" id="PF00115">
    <property type="entry name" value="COX1"/>
    <property type="match status" value="1"/>
</dbReference>
<dbReference type="PRINTS" id="PR01165">
    <property type="entry name" value="CYCOXIDASEI"/>
</dbReference>
<dbReference type="SUPFAM" id="SSF81442">
    <property type="entry name" value="Cytochrome c oxidase subunit I-like"/>
    <property type="match status" value="1"/>
</dbReference>
<dbReference type="PROSITE" id="PS50855">
    <property type="entry name" value="COX1"/>
    <property type="match status" value="1"/>
</dbReference>
<dbReference type="PROSITE" id="PS00077">
    <property type="entry name" value="COX1_CUB"/>
    <property type="match status" value="1"/>
</dbReference>
<feature type="chain" id="PRO_0000183293" description="Cytochrome c oxidase subunit 1">
    <location>
        <begin position="1"/>
        <end position="524"/>
    </location>
</feature>
<feature type="transmembrane region" description="Helical" evidence="3">
    <location>
        <begin position="18"/>
        <end position="38"/>
    </location>
</feature>
<feature type="transmembrane region" description="Helical" evidence="3">
    <location>
        <begin position="66"/>
        <end position="86"/>
    </location>
</feature>
<feature type="transmembrane region" description="Helical" evidence="3">
    <location>
        <begin position="103"/>
        <end position="123"/>
    </location>
</feature>
<feature type="transmembrane region" description="Helical" evidence="3">
    <location>
        <begin position="148"/>
        <end position="168"/>
    </location>
</feature>
<feature type="transmembrane region" description="Helical" evidence="3">
    <location>
        <begin position="186"/>
        <end position="206"/>
    </location>
</feature>
<feature type="transmembrane region" description="Helical" evidence="3">
    <location>
        <begin position="237"/>
        <end position="257"/>
    </location>
</feature>
<feature type="transmembrane region" description="Helical" evidence="3">
    <location>
        <begin position="269"/>
        <end position="289"/>
    </location>
</feature>
<feature type="transmembrane region" description="Helical" evidence="3">
    <location>
        <begin position="312"/>
        <end position="332"/>
    </location>
</feature>
<feature type="transmembrane region" description="Helical" evidence="3">
    <location>
        <begin position="340"/>
        <end position="360"/>
    </location>
</feature>
<feature type="transmembrane region" description="Helical" evidence="3">
    <location>
        <begin position="379"/>
        <end position="399"/>
    </location>
</feature>
<feature type="transmembrane region" description="Helical" evidence="3">
    <location>
        <begin position="414"/>
        <end position="434"/>
    </location>
</feature>
<feature type="transmembrane region" description="Helical" evidence="3">
    <location>
        <begin position="458"/>
        <end position="478"/>
    </location>
</feature>
<feature type="binding site" evidence="2">
    <location>
        <position position="41"/>
    </location>
    <ligand>
        <name>Ca(2+)</name>
        <dbReference type="ChEBI" id="CHEBI:29108"/>
    </ligand>
</feature>
<feature type="binding site" evidence="2">
    <location>
        <position position="46"/>
    </location>
    <ligand>
        <name>Ca(2+)</name>
        <dbReference type="ChEBI" id="CHEBI:29108"/>
    </ligand>
</feature>
<feature type="binding site" description="axial binding residue" evidence="2">
    <location>
        <position position="64"/>
    </location>
    <ligand>
        <name>Fe(II)-heme a</name>
        <dbReference type="ChEBI" id="CHEBI:61715"/>
        <note>low-spin</note>
    </ligand>
    <ligandPart>
        <name>Fe</name>
        <dbReference type="ChEBI" id="CHEBI:18248"/>
    </ligandPart>
</feature>
<feature type="binding site" evidence="2">
    <location>
        <position position="243"/>
    </location>
    <ligand>
        <name>Cu cation</name>
        <dbReference type="ChEBI" id="CHEBI:23378"/>
        <label>B</label>
    </ligand>
</feature>
<feature type="binding site" evidence="1">
    <location>
        <position position="247"/>
    </location>
    <ligand>
        <name>O2</name>
        <dbReference type="ChEBI" id="CHEBI:15379"/>
    </ligand>
</feature>
<feature type="binding site" evidence="2">
    <location>
        <position position="292"/>
    </location>
    <ligand>
        <name>Cu cation</name>
        <dbReference type="ChEBI" id="CHEBI:23378"/>
        <label>B</label>
    </ligand>
</feature>
<feature type="binding site" evidence="2">
    <location>
        <position position="293"/>
    </location>
    <ligand>
        <name>Cu cation</name>
        <dbReference type="ChEBI" id="CHEBI:23378"/>
        <label>B</label>
    </ligand>
</feature>
<feature type="binding site" evidence="2">
    <location>
        <position position="370"/>
    </location>
    <ligand>
        <name>Mg(2+)</name>
        <dbReference type="ChEBI" id="CHEBI:18420"/>
        <note>ligand shared with subunit 2</note>
    </ligand>
</feature>
<feature type="binding site" evidence="2">
    <location>
        <position position="371"/>
    </location>
    <ligand>
        <name>Mg(2+)</name>
        <dbReference type="ChEBI" id="CHEBI:18420"/>
        <note>ligand shared with subunit 2</note>
    </ligand>
</feature>
<feature type="binding site" description="axial binding residue" evidence="2">
    <location>
        <position position="378"/>
    </location>
    <ligand>
        <name>heme a3</name>
        <dbReference type="ChEBI" id="CHEBI:83282"/>
        <note>high-spin</note>
    </ligand>
    <ligandPart>
        <name>Fe</name>
        <dbReference type="ChEBI" id="CHEBI:18248"/>
    </ligandPart>
</feature>
<feature type="binding site" description="axial binding residue" evidence="2">
    <location>
        <position position="380"/>
    </location>
    <ligand>
        <name>Fe(II)-heme a</name>
        <dbReference type="ChEBI" id="CHEBI:61715"/>
        <note>low-spin</note>
    </ligand>
    <ligandPart>
        <name>Fe</name>
        <dbReference type="ChEBI" id="CHEBI:18248"/>
    </ligandPart>
</feature>
<feature type="binding site" evidence="2">
    <location>
        <position position="443"/>
    </location>
    <ligand>
        <name>Ca(2+)</name>
        <dbReference type="ChEBI" id="CHEBI:29108"/>
    </ligand>
</feature>
<feature type="cross-link" description="1'-histidyl-3'-tyrosine (His-Tyr)" evidence="2">
    <location>
        <begin position="243"/>
        <end position="247"/>
    </location>
</feature>
<feature type="sequence conflict" description="In Ref. 2; AAA87330." evidence="4" ref="2">
    <original>MTNLVRWLF</original>
    <variation>MAV</variation>
    <location>
        <begin position="1"/>
        <end position="9"/>
    </location>
</feature>
<feature type="sequence conflict" description="In Ref. 2; AAA87330." evidence="4" ref="2">
    <original>TTFFDPAG</original>
    <variation>RPFLIRW</variation>
    <location>
        <begin position="220"/>
        <end position="227"/>
    </location>
</feature>
<feature type="sequence conflict" description="In Ref. 2; AAA87330." evidence="4" ref="2">
    <original>EWM</original>
    <variation>ND</variation>
    <location>
        <begin position="501"/>
        <end position="503"/>
    </location>
</feature>
<organism>
    <name type="scientific">Beta vulgaris</name>
    <name type="common">Sugar beet</name>
    <dbReference type="NCBI Taxonomy" id="161934"/>
    <lineage>
        <taxon>Eukaryota</taxon>
        <taxon>Viridiplantae</taxon>
        <taxon>Streptophyta</taxon>
        <taxon>Embryophyta</taxon>
        <taxon>Tracheophyta</taxon>
        <taxon>Spermatophyta</taxon>
        <taxon>Magnoliopsida</taxon>
        <taxon>eudicotyledons</taxon>
        <taxon>Gunneridae</taxon>
        <taxon>Pentapetalae</taxon>
        <taxon>Caryophyllales</taxon>
        <taxon>Chenopodiaceae</taxon>
        <taxon>Betoideae</taxon>
        <taxon>Beta</taxon>
    </lineage>
</organism>
<geneLocation type="mitochondrion"/>
<comment type="function">
    <text evidence="2">Component of the cytochrome c oxidase, the last enzyme in the mitochondrial electron transport chain which drives oxidative phosphorylation. The respiratory chain contains 3 multisubunit complexes succinate dehydrogenase (complex II, CII), ubiquinol-cytochrome c oxidoreductase (cytochrome b-c1 complex, complex III, CIII) and cytochrome c oxidase (complex IV, CIV), that cooperate to transfer electrons derived from NADH and succinate to molecular oxygen, creating an electrochemical gradient over the inner membrane that drives transmembrane transport and the ATP synthase. Cytochrome c oxidase is the component of the respiratory chain that catalyzes the reduction of oxygen to water. Electrons originating from reduced cytochrome c in the intermembrane space (IMS) are transferred via the dinuclear copper A center (CU(A)) of subunit 2 and heme A of subunit 1 to the active site in subunit 1, a binuclear center (BNC) formed by heme A3 and copper B (CU(B)). The BNC reduces molecular oxygen to 2 water molecules using 4 electrons from cytochrome c in the IMS and 4 protons from the mitochondrial matrix.</text>
</comment>
<comment type="catalytic activity">
    <reaction evidence="2">
        <text>4 Fe(II)-[cytochrome c] + O2 + 8 H(+)(in) = 4 Fe(III)-[cytochrome c] + 2 H2O + 4 H(+)(out)</text>
        <dbReference type="Rhea" id="RHEA:11436"/>
        <dbReference type="Rhea" id="RHEA-COMP:10350"/>
        <dbReference type="Rhea" id="RHEA-COMP:14399"/>
        <dbReference type="ChEBI" id="CHEBI:15377"/>
        <dbReference type="ChEBI" id="CHEBI:15378"/>
        <dbReference type="ChEBI" id="CHEBI:15379"/>
        <dbReference type="ChEBI" id="CHEBI:29033"/>
        <dbReference type="ChEBI" id="CHEBI:29034"/>
        <dbReference type="EC" id="7.1.1.9"/>
    </reaction>
    <physiologicalReaction direction="left-to-right" evidence="2">
        <dbReference type="Rhea" id="RHEA:11437"/>
    </physiologicalReaction>
</comment>
<comment type="cofactor">
    <cofactor evidence="2">
        <name>heme</name>
        <dbReference type="ChEBI" id="CHEBI:30413"/>
    </cofactor>
    <text evidence="2">Binds 2 heme A groups non-covalently per subunit.</text>
</comment>
<comment type="cofactor">
    <cofactor evidence="2">
        <name>Cu cation</name>
        <dbReference type="ChEBI" id="CHEBI:23378"/>
    </cofactor>
    <text evidence="2">Binds a copper B center.</text>
</comment>
<comment type="pathway">
    <text evidence="2">Energy metabolism; oxidative phosphorylation.</text>
</comment>
<comment type="subunit">
    <text evidence="2">Component of the cytochrome c oxidase (complex IV, CIV), a multisubunit enzyme composed of a catalytic core of 3 subunits and several supernumerary subunits. The complex exists as a monomer or a dimer and forms supercomplexes (SCs) in the inner mitochondrial membrane with ubiquinol-cytochrome c oxidoreductase (cytochrome b-c1 complex, complex III, CIII).</text>
</comment>
<comment type="subcellular location">
    <subcellularLocation>
        <location evidence="2">Mitochondrion inner membrane</location>
        <topology evidence="2">Multi-pass membrane protein</topology>
    </subcellularLocation>
</comment>
<comment type="similarity">
    <text evidence="4">Belongs to the heme-copper respiratory oxidase family.</text>
</comment>
<protein>
    <recommendedName>
        <fullName>Cytochrome c oxidase subunit 1</fullName>
        <ecNumber>7.1.1.9</ecNumber>
    </recommendedName>
    <alternativeName>
        <fullName>Cytochrome c oxidase polypeptide I</fullName>
    </alternativeName>
</protein>
<accession>P24794</accession>
<reference key="1">
    <citation type="journal article" date="1991" name="Curr. Genet.">
        <title>Genomic organization and sequence analysis of the cytochrome oxidase subunit II gene from normal and male-sterile mitochondria in sugar beet.</title>
        <authorList>
            <person name="Senda M."/>
            <person name="Harada T."/>
            <person name="Mikami T."/>
            <person name="Sugiura M."/>
            <person name="Kinoshita T."/>
        </authorList>
    </citation>
    <scope>NUCLEOTIDE SEQUENCE [GENOMIC DNA]</scope>
    <source>
        <strain>cv. TK81-O</strain>
    </source>
</reference>
<reference key="2">
    <citation type="journal article" date="1987" name="Proc. Sugar Beet Res.">
        <title>Nucleotide sequence of cytochrome c oxidase subunit I gene of sugar beet mitochondria.</title>
        <authorList>
            <person name="Harada T."/>
            <person name="Mikami T."/>
            <person name="Kinoshita T."/>
        </authorList>
    </citation>
    <scope>NUCLEOTIDE SEQUENCE [GENOMIC DNA]</scope>
</reference>
<name>COX1_BETVU</name>
<sequence>MTNLVRWLFSTNHKDIGTLYFIFGAIAGVMGTCFSVLIRMELARPGDQILGGNHQLYNVLITAHAFLMIFFMVMPAMIGGFGNWFVPILIGAPDMAFPRLNNISFWLLPPSLLLLLSSALVEVGSGTGWTVYPPLSGITSHSGGAVDLAIFSLHLSGVSSILGSINFITTIFNMRGPGMTMHRLPLFVWSVLVTAFLLLLSLPVLAGAITMLLTDRNFNTTFFDPAGGGDPILYQHLFWFFGHPEVYILILPGFGIISHIVSTFSGKPVFGYLGMVYAMISIGVLGFLVWAHHMFTVGLDVDTRAYFTAATMIIAVPTGIKIFSWIATMWGGSIQYKTPMLFAVGFIFLFTVGGLTGIVLANSGLDIALHDTYYVVAHFHYVLSMGAVFALFAGFYYWVGKIFGRTYPETLGQIHFWITFFGVNLTFFPMHFLGLSGMPRRIPDYPDAYAGWNALSSFGSYISVVGICCFFVVVTITLSSGKNKRCAPSPWAVEENSTTLEWMVQSPPAFHTFGELPAIKETKS</sequence>
<gene>
    <name type="primary">COX1</name>
    <name type="synonym">COXI</name>
</gene>
<keyword id="KW-0106">Calcium</keyword>
<keyword id="KW-0186">Copper</keyword>
<keyword id="KW-0249">Electron transport</keyword>
<keyword id="KW-0349">Heme</keyword>
<keyword id="KW-0408">Iron</keyword>
<keyword id="KW-0460">Magnesium</keyword>
<keyword id="KW-0472">Membrane</keyword>
<keyword id="KW-0479">Metal-binding</keyword>
<keyword id="KW-0496">Mitochondrion</keyword>
<keyword id="KW-0999">Mitochondrion inner membrane</keyword>
<keyword id="KW-0679">Respiratory chain</keyword>
<keyword id="KW-1278">Translocase</keyword>
<keyword id="KW-0812">Transmembrane</keyword>
<keyword id="KW-1133">Transmembrane helix</keyword>
<keyword id="KW-0813">Transport</keyword>